<reference key="1">
    <citation type="journal article" date="2006" name="Nature">
        <title>The finished DNA sequence of human chromosome 12.</title>
        <authorList>
            <person name="Scherer S.E."/>
            <person name="Muzny D.M."/>
            <person name="Buhay C.J."/>
            <person name="Chen R."/>
            <person name="Cree A."/>
            <person name="Ding Y."/>
            <person name="Dugan-Rocha S."/>
            <person name="Gill R."/>
            <person name="Gunaratne P."/>
            <person name="Harris R.A."/>
            <person name="Hawes A.C."/>
            <person name="Hernandez J."/>
            <person name="Hodgson A.V."/>
            <person name="Hume J."/>
            <person name="Jackson A."/>
            <person name="Khan Z.M."/>
            <person name="Kovar-Smith C."/>
            <person name="Lewis L.R."/>
            <person name="Lozado R.J."/>
            <person name="Metzker M.L."/>
            <person name="Milosavljevic A."/>
            <person name="Miner G.R."/>
            <person name="Montgomery K.T."/>
            <person name="Morgan M.B."/>
            <person name="Nazareth L.V."/>
            <person name="Scott G."/>
            <person name="Sodergren E."/>
            <person name="Song X.-Z."/>
            <person name="Steffen D."/>
            <person name="Lovering R.C."/>
            <person name="Wheeler D.A."/>
            <person name="Worley K.C."/>
            <person name="Yuan Y."/>
            <person name="Zhang Z."/>
            <person name="Adams C.Q."/>
            <person name="Ansari-Lari M.A."/>
            <person name="Ayele M."/>
            <person name="Brown M.J."/>
            <person name="Chen G."/>
            <person name="Chen Z."/>
            <person name="Clerc-Blankenburg K.P."/>
            <person name="Davis C."/>
            <person name="Delgado O."/>
            <person name="Dinh H.H."/>
            <person name="Draper H."/>
            <person name="Gonzalez-Garay M.L."/>
            <person name="Havlak P."/>
            <person name="Jackson L.R."/>
            <person name="Jacob L.S."/>
            <person name="Kelly S.H."/>
            <person name="Li L."/>
            <person name="Li Z."/>
            <person name="Liu J."/>
            <person name="Liu W."/>
            <person name="Lu J."/>
            <person name="Maheshwari M."/>
            <person name="Nguyen B.-V."/>
            <person name="Okwuonu G.O."/>
            <person name="Pasternak S."/>
            <person name="Perez L.M."/>
            <person name="Plopper F.J.H."/>
            <person name="Santibanez J."/>
            <person name="Shen H."/>
            <person name="Tabor P.E."/>
            <person name="Verduzco D."/>
            <person name="Waldron L."/>
            <person name="Wang Q."/>
            <person name="Williams G.A."/>
            <person name="Zhang J."/>
            <person name="Zhou J."/>
            <person name="Allen C.C."/>
            <person name="Amin A.G."/>
            <person name="Anyalebechi V."/>
            <person name="Bailey M."/>
            <person name="Barbaria J.A."/>
            <person name="Bimage K.E."/>
            <person name="Bryant N.P."/>
            <person name="Burch P.E."/>
            <person name="Burkett C.E."/>
            <person name="Burrell K.L."/>
            <person name="Calderon E."/>
            <person name="Cardenas V."/>
            <person name="Carter K."/>
            <person name="Casias K."/>
            <person name="Cavazos I."/>
            <person name="Cavazos S.R."/>
            <person name="Ceasar H."/>
            <person name="Chacko J."/>
            <person name="Chan S.N."/>
            <person name="Chavez D."/>
            <person name="Christopoulos C."/>
            <person name="Chu J."/>
            <person name="Cockrell R."/>
            <person name="Cox C.D."/>
            <person name="Dang M."/>
            <person name="Dathorne S.R."/>
            <person name="David R."/>
            <person name="Davis C.M."/>
            <person name="Davy-Carroll L."/>
            <person name="Deshazo D.R."/>
            <person name="Donlin J.E."/>
            <person name="D'Souza L."/>
            <person name="Eaves K.A."/>
            <person name="Egan A."/>
            <person name="Emery-Cohen A.J."/>
            <person name="Escotto M."/>
            <person name="Flagg N."/>
            <person name="Forbes L.D."/>
            <person name="Gabisi A.M."/>
            <person name="Garza M."/>
            <person name="Hamilton C."/>
            <person name="Henderson N."/>
            <person name="Hernandez O."/>
            <person name="Hines S."/>
            <person name="Hogues M.E."/>
            <person name="Huang M."/>
            <person name="Idlebird D.G."/>
            <person name="Johnson R."/>
            <person name="Jolivet A."/>
            <person name="Jones S."/>
            <person name="Kagan R."/>
            <person name="King L.M."/>
            <person name="Leal B."/>
            <person name="Lebow H."/>
            <person name="Lee S."/>
            <person name="LeVan J.M."/>
            <person name="Lewis L.C."/>
            <person name="London P."/>
            <person name="Lorensuhewa L.M."/>
            <person name="Loulseged H."/>
            <person name="Lovett D.A."/>
            <person name="Lucier A."/>
            <person name="Lucier R.L."/>
            <person name="Ma J."/>
            <person name="Madu R.C."/>
            <person name="Mapua P."/>
            <person name="Martindale A.D."/>
            <person name="Martinez E."/>
            <person name="Massey E."/>
            <person name="Mawhiney S."/>
            <person name="Meador M.G."/>
            <person name="Mendez S."/>
            <person name="Mercado C."/>
            <person name="Mercado I.C."/>
            <person name="Merritt C.E."/>
            <person name="Miner Z.L."/>
            <person name="Minja E."/>
            <person name="Mitchell T."/>
            <person name="Mohabbat F."/>
            <person name="Mohabbat K."/>
            <person name="Montgomery B."/>
            <person name="Moore N."/>
            <person name="Morris S."/>
            <person name="Munidasa M."/>
            <person name="Ngo R.N."/>
            <person name="Nguyen N.B."/>
            <person name="Nickerson E."/>
            <person name="Nwaokelemeh O.O."/>
            <person name="Nwokenkwo S."/>
            <person name="Obregon M."/>
            <person name="Oguh M."/>
            <person name="Oragunye N."/>
            <person name="Oviedo R.J."/>
            <person name="Parish B.J."/>
            <person name="Parker D.N."/>
            <person name="Parrish J."/>
            <person name="Parks K.L."/>
            <person name="Paul H.A."/>
            <person name="Payton B.A."/>
            <person name="Perez A."/>
            <person name="Perrin W."/>
            <person name="Pickens A."/>
            <person name="Primus E.L."/>
            <person name="Pu L.-L."/>
            <person name="Puazo M."/>
            <person name="Quiles M.M."/>
            <person name="Quiroz J.B."/>
            <person name="Rabata D."/>
            <person name="Reeves K."/>
            <person name="Ruiz S.J."/>
            <person name="Shao H."/>
            <person name="Sisson I."/>
            <person name="Sonaike T."/>
            <person name="Sorelle R.P."/>
            <person name="Sutton A.E."/>
            <person name="Svatek A.F."/>
            <person name="Svetz L.A."/>
            <person name="Tamerisa K.S."/>
            <person name="Taylor T.R."/>
            <person name="Teague B."/>
            <person name="Thomas N."/>
            <person name="Thorn R.D."/>
            <person name="Trejos Z.Y."/>
            <person name="Trevino B.K."/>
            <person name="Ukegbu O.N."/>
            <person name="Urban J.B."/>
            <person name="Vasquez L.I."/>
            <person name="Vera V.A."/>
            <person name="Villasana D.M."/>
            <person name="Wang L."/>
            <person name="Ward-Moore S."/>
            <person name="Warren J.T."/>
            <person name="Wei X."/>
            <person name="White F."/>
            <person name="Williamson A.L."/>
            <person name="Wleczyk R."/>
            <person name="Wooden H.S."/>
            <person name="Wooden S.H."/>
            <person name="Yen J."/>
            <person name="Yoon L."/>
            <person name="Yoon V."/>
            <person name="Zorrilla S.E."/>
            <person name="Nelson D."/>
            <person name="Kucherlapati R."/>
            <person name="Weinstock G."/>
            <person name="Gibbs R.A."/>
        </authorList>
    </citation>
    <scope>NUCLEOTIDE SEQUENCE [LARGE SCALE GENOMIC DNA]</scope>
</reference>
<reference key="2">
    <citation type="journal article" date="2004" name="Genome Res.">
        <title>The status, quality, and expansion of the NIH full-length cDNA project: the Mammalian Gene Collection (MGC).</title>
        <authorList>
            <consortium name="The MGC Project Team"/>
        </authorList>
    </citation>
    <scope>NUCLEOTIDE SEQUENCE [LARGE SCALE MRNA] (ISOFORM 3)</scope>
</reference>
<reference key="3">
    <citation type="journal article" date="1999" name="Neuron">
        <title>EphrinB ligands recruit GRIP family PDZ adaptor proteins into raft membrane microdomains.</title>
        <authorList>
            <person name="Brueckner K."/>
            <person name="Pablo Labrador J."/>
            <person name="Scheiffele P."/>
            <person name="Herb A."/>
            <person name="Seeburg P.H."/>
            <person name="Klein R."/>
        </authorList>
    </citation>
    <scope>NUCLEOTIDE SEQUENCE [MRNA] OF 265-1128 (ISOFORM 2)</scope>
    <scope>FUNCTION</scope>
    <scope>INTERACTION WITH EFNB1 AND EFNB3</scope>
    <scope>SUBCELLULAR LOCATION</scope>
    <source>
        <tissue>Fetal brain</tissue>
    </source>
</reference>
<reference key="4">
    <citation type="journal article" date="2001" name="Mol. Pharmacol.">
        <title>The carboxyl terminus of the prolactin-releasing peptide receptor interacts with PDZ domain proteins involved in alpha-amino-3-hydroxy-5-methylisoxazole-4-propionic acid receptor clustering.</title>
        <authorList>
            <person name="Lin S.H.S."/>
            <person name="Arai A.C."/>
            <person name="Wang Z."/>
            <person name="Nothacker H.-P."/>
            <person name="Civelli O."/>
        </authorList>
    </citation>
    <scope>INTERACTION WITH PRLHR</scope>
</reference>
<reference key="5">
    <citation type="journal article" date="2012" name="J. Med. Genet.">
        <title>Mutations in GRIP1 cause Fraser syndrome.</title>
        <authorList>
            <person name="Vogel M.J."/>
            <person name="van Zon P."/>
            <person name="Brueton L."/>
            <person name="Gijzen M."/>
            <person name="van Tuil M.C."/>
            <person name="Cox P."/>
            <person name="Schanze D."/>
            <person name="Kariminejad A."/>
            <person name="Ghaderi-Sohi S."/>
            <person name="Blair E."/>
            <person name="Zenker M."/>
            <person name="Scambler P.J."/>
            <person name="Ploos van Amstel H.K."/>
            <person name="van Haelst M.M."/>
        </authorList>
    </citation>
    <scope>INVOLVEMENT IN FRASRS3</scope>
</reference>
<reference key="6">
    <citation type="journal article" date="2014" name="J. Biol. Chem.">
        <title>The methyltransferase WBSCR22/Merm1 enhances glucocorticoid receptor function and is regulated in lung inflammation and cancer.</title>
        <authorList>
            <person name="Jangani M."/>
            <person name="Poolman T.M."/>
            <person name="Matthews L."/>
            <person name="Yang N."/>
            <person name="Farrow S.N."/>
            <person name="Berry A."/>
            <person name="Hanley N."/>
            <person name="Williamson A.J."/>
            <person name="Whetton A.D."/>
            <person name="Donn R."/>
            <person name="Ray D.W."/>
        </authorList>
    </citation>
    <scope>INTERACTION WITH BUD23</scope>
</reference>
<organism>
    <name type="scientific">Homo sapiens</name>
    <name type="common">Human</name>
    <dbReference type="NCBI Taxonomy" id="9606"/>
    <lineage>
        <taxon>Eukaryota</taxon>
        <taxon>Metazoa</taxon>
        <taxon>Chordata</taxon>
        <taxon>Craniata</taxon>
        <taxon>Vertebrata</taxon>
        <taxon>Euteleostomi</taxon>
        <taxon>Mammalia</taxon>
        <taxon>Eutheria</taxon>
        <taxon>Euarchontoglires</taxon>
        <taxon>Primates</taxon>
        <taxon>Haplorrhini</taxon>
        <taxon>Catarrhini</taxon>
        <taxon>Hominidae</taxon>
        <taxon>Homo</taxon>
    </lineage>
</organism>
<name>GRIP1_HUMAN</name>
<accession>Q9Y3R0</accession>
<accession>C9JT59</accession>
<accession>Q1RLM0</accession>
<proteinExistence type="evidence at protein level"/>
<sequence>MIAVSFKCRCQILRRLTKDESPYTKSASQTKPPDGALAVRRQSIPEEFKGSTVVELMKKEGTTLGLTVSGGIDKDGKPRVSNLRQGGIAARSDQLDVGDYIKAVNGINLAKFRHDEIISLLKNVGERVVLEVEYELPPVSVQGSSVIFRTVEVTLHKEGNTFGFVIRGGAHDDRNKSRPVVITCVRPGGPADREGTIKPGDRLLSVDGIRLLGTTHAEAMSILKQCGQEAALLIEYDVSVMDSVATASGPLLVEVAKTPGASLGVALTTSMCCNKQVIVIDKIKSASIADRCGALHVGDHILSIDGTSMEYCTLAEATQFLANTTDQVKLEILPHHQTRLALKGPDHVKIQRSDRQLTWDSWASNHSSLHTNHHYNTYHPDHCRVPALTFPKAPPPNSPPALVSSSFSPTSMSAYSLSSLNMGTLPRSLYSTSPRGTMMRRRLKKKDFKSSLSLASSTVGLAGQVVHTETTEVVLTADPVTGFGIQLQGSVFATETLSSPPLISYIEADSPAERCGVLQIGDRVMAINGIPTEDSTFEEASQLLRDSSITSKVTLEIEFDVAESVIPSSGTFHVKLPKKHNVELGITISSPSSRKPGDPLVISDIKKGSVAHRTGTLELGDKLLAIDNIRLDNCSMEDAVQILQQCEDLVKLKIRKDEDNSDEQESSGAIIYTVELKRYGGPLGITISGTEEPFDPIIISSLTKGGLAERTGAIHIGDRILAINSSSLKGKPLSEAIHLLQMAGETVTLKIKKQTDAQSASSPKKFPISSHLSDLGDVEEDSSPAQKPGKLSDMYPSTVPSVDSAVDSWDGSAIDTSYGTQGTSFQASGYNFNTYDWRSPKQRGSLSPVTKPRSQTYPDVGLSYEDWDRSTASGFAGAADSAETEQEENFWSQALEDLETCGQSGILRELEEKADRRVSLRNMTLLATIMSGSTMSLNHEAPTPRSQLGRQASFQERSSSRPHYSQTTRSNTLPSDVGRKSVTLRKMKQEIKEIMSPTPVELHKVTLYKDSDMEDFGFSVADGLLEKGVYVKNIRPAGPGDLGGLKPYDRLLQVNHVRTRDFDCCLVVPLIAESGNKLDLVISRNPLASQKSIDQQSLPGDWSEQNSAFFQQPSHGGNLETREPTNTL</sequence>
<gene>
    <name type="primary">GRIP1</name>
</gene>
<comment type="function">
    <text evidence="2 5">May play a role as a localized scaffold for the assembly of a multiprotein signaling complex and as mediator of the trafficking of its binding partners at specific subcellular location in neurons (PubMed:10197531). Through complex formation with NSG1, GRIA2 and STX12 controls the intracellular fate of AMPAR and the endosomal sorting of the GRIA2 subunit toward recycling and membrane targeting (By similarity).</text>
</comment>
<comment type="subunit">
    <text evidence="1 2 5 6 8">Interacts with EPHA7, EPHB2, KIF5A, KIF5B, KIF5C, GRIA2, GRIA3, GRIPAP1/GRASP1, PPFIA1, PPFIA4, FRAS1, PLCD4, PTPRF and liprins-alpha. Can form homomultimers or heteromultimers with GRIP2. Forms a ternary complex with GRIA2 and CSPG4 (By similarity). Interacts with ATAD1 in an ATP-dependent manner. ATAD1-catalyzed ATP hydrolysis disrupts binding to ATAD1 and to GRIA2 and leads to AMPAR complex disassembly (By similarity). Interacts with EFNB1, EFNB3 and the C-terminal tail of PRLHR. Interacts with SLC30A9 (By similarity). Interacts with BUD23. Forms a complex with NSG1, GRIA2 and STX12; controls the intracellular fate of AMPAR and the endosomal sorting of the GRIA2 subunit toward recycling and membrane targeting. Interacts with NSG1 (By similarity).</text>
</comment>
<comment type="interaction">
    <interactant intactId="EBI-5349621">
        <id>Q9Y3R0</id>
    </interactant>
    <interactant intactId="EBI-78473">
        <id>P03372</id>
        <label>ESR1</label>
    </interactant>
    <organismsDiffer>false</organismsDiffer>
    <experiments>2</experiments>
</comment>
<comment type="interaction">
    <interactant intactId="EBI-5349621">
        <id>Q9Y3R0</id>
    </interactant>
    <interactant intactId="EBI-2650369">
        <id>Q14653</id>
        <label>IRF3</label>
    </interactant>
    <organismsDiffer>false</organismsDiffer>
    <experiments>2</experiments>
</comment>
<comment type="interaction">
    <interactant intactId="EBI-5349621">
        <id>Q9Y3R0</id>
    </interactant>
    <interactant intactId="EBI-8009236">
        <id>P49683</id>
        <label>PRLHR</label>
    </interactant>
    <organismsDiffer>false</organismsDiffer>
    <experiments>2</experiments>
</comment>
<comment type="interaction">
    <interactant intactId="EBI-5349621">
        <id>Q9Y3R0</id>
    </interactant>
    <interactant intactId="EBI-603300">
        <id>P28065</id>
        <label>PSMB9</label>
    </interactant>
    <organismsDiffer>false</organismsDiffer>
    <experiments>3</experiments>
</comment>
<comment type="interaction">
    <interactant intactId="EBI-5349621">
        <id>Q9Y3R0</id>
    </interactant>
    <interactant intactId="EBI-356498">
        <id>P62258</id>
        <label>YWHAE</label>
    </interactant>
    <organismsDiffer>false</organismsDiffer>
    <experiments>4</experiments>
</comment>
<comment type="interaction">
    <interactant intactId="EBI-12193965">
        <id>Q9Y3R0-3</id>
    </interactant>
    <interactant intactId="EBI-12262046">
        <id>Q7L9B9</id>
        <label>EEPD1</label>
    </interactant>
    <organismsDiffer>false</organismsDiffer>
    <experiments>3</experiments>
</comment>
<comment type="interaction">
    <interactant intactId="EBI-12193965">
        <id>Q9Y3R0-3</id>
    </interactant>
    <interactant intactId="EBI-10699759">
        <id>P61328-2</id>
        <label>FGF12</label>
    </interactant>
    <organismsDiffer>false</organismsDiffer>
    <experiments>3</experiments>
</comment>
<comment type="interaction">
    <interactant intactId="EBI-12193965">
        <id>Q9Y3R0-3</id>
    </interactant>
    <interactant intactId="EBI-1056174">
        <id>O60921</id>
        <label>HUS1</label>
    </interactant>
    <organismsDiffer>false</organismsDiffer>
    <experiments>3</experiments>
</comment>
<comment type="interaction">
    <interactant intactId="EBI-12193965">
        <id>Q9Y3R0-3</id>
    </interactant>
    <interactant intactId="EBI-11287173">
        <id>P55082</id>
        <label>MFAP3</label>
    </interactant>
    <organismsDiffer>false</organismsDiffer>
    <experiments>3</experiments>
</comment>
<comment type="interaction">
    <interactant intactId="EBI-12193965">
        <id>Q9Y3R0-3</id>
    </interactant>
    <interactant intactId="EBI-11750983">
        <id>Q9HC98-4</id>
        <label>NEK6</label>
    </interactant>
    <organismsDiffer>false</organismsDiffer>
    <experiments>3</experiments>
</comment>
<comment type="interaction">
    <interactant intactId="EBI-12193965">
        <id>Q9Y3R0-3</id>
    </interactant>
    <interactant intactId="EBI-1568315">
        <id>Q9NNW5</id>
        <label>WDR6</label>
    </interactant>
    <organismsDiffer>false</organismsDiffer>
    <experiments>3</experiments>
</comment>
<comment type="interaction">
    <interactant intactId="EBI-12193965">
        <id>Q9Y3R0-3</id>
    </interactant>
    <interactant intactId="EBI-2557331">
        <id>P47989</id>
        <label>XDH</label>
    </interactant>
    <organismsDiffer>false</organismsDiffer>
    <experiments>3</experiments>
</comment>
<comment type="subcellular location">
    <subcellularLocation>
        <location evidence="5">Cytoplasmic vesicle</location>
    </subcellularLocation>
    <subcellularLocation>
        <location evidence="2">Perikaryon</location>
    </subcellularLocation>
    <subcellularLocation>
        <location evidence="2">Cell projection</location>
        <location evidence="2">Dendrite</location>
    </subcellularLocation>
    <subcellularLocation>
        <location evidence="2">Cytoplasm</location>
    </subcellularLocation>
    <subcellularLocation>
        <location evidence="2">Endomembrane system</location>
        <topology evidence="2">Peripheral membrane protein</topology>
    </subcellularLocation>
    <subcellularLocation>
        <location evidence="2">Postsynaptic cell membrane</location>
    </subcellularLocation>
    <subcellularLocation>
        <location evidence="2">Postsynaptic density</location>
    </subcellularLocation>
    <subcellularLocation>
        <location evidence="5">Endoplasmic reticulum membrane</location>
        <topology evidence="2">Peripheral membrane protein</topology>
    </subcellularLocation>
    <text evidence="2">Membrane-associated with vesicles, peri-Golgi complexes and endoplasmic reticulum. Enriched in postsynaptic plasma membrane and postsynaptic densities.</text>
</comment>
<comment type="alternative products">
    <event type="alternative splicing"/>
    <isoform>
        <id>Q9Y3R0-1</id>
        <name>1</name>
        <sequence type="displayed"/>
    </isoform>
    <isoform>
        <id>Q9Y3R0-2</id>
        <name>2</name>
        <sequence type="described" ref="VSP_009743"/>
    </isoform>
    <isoform>
        <id>Q9Y3R0-3</id>
        <name>3</name>
        <sequence type="described" ref="VSP_040281"/>
    </isoform>
</comment>
<comment type="domain">
    <text evidence="1">PDZ 6 mediates interaction with the PDZ recognition motif of EFNB1 and EPHB2 and with the C-terminus of PPFIA1 and PPFIA4. PDZ 4 and PDZ 5 mediate interaction with the C-terminus of GRIA2 and GRIA3. PDZ 4, PDZ 5 and PDZ 6 mediate homomultimers. PDZ 7 mediates interaction with PDZ domain of GRASP1. PDZ 7 domain binds CSPG4. PDZ 6 mediates interaction with the C-terminus of liprins-alpha. PDZ 1, PDZ 2 and PDZ 3 mediate interaction with the PDZ-binding motif of FRAS1 (By similarity). PDZ 4 and PDZ 5 mediate interaction with PRLHR.</text>
</comment>
<comment type="disease" evidence="7">
    <disease id="DI-05099">
        <name>Fraser syndrome 3</name>
        <acronym>FRASRS3</acronym>
        <description>A form of Fraser syndrome, an autosomal recessive disorder characterized by cryptophthalmos, cutaneous syndactyly, and urogenital abnormalities including renal agenesis or hypoplasia. Additional features include abnormalities of the larynx, ear malformations, and facial abnormalities.</description>
        <dbReference type="MIM" id="617667"/>
    </disease>
    <text>The disease is caused by variants affecting the gene represented in this entry.</text>
</comment>
<feature type="chain" id="PRO_0000083849" description="Glutamate receptor-interacting protein 1">
    <location>
        <begin position="1"/>
        <end position="1128"/>
    </location>
</feature>
<feature type="domain" description="PDZ 1" evidence="3">
    <location>
        <begin position="53"/>
        <end position="136"/>
    </location>
</feature>
<feature type="domain" description="PDZ 2" evidence="3">
    <location>
        <begin position="150"/>
        <end position="238"/>
    </location>
</feature>
<feature type="domain" description="PDZ 3" evidence="3">
    <location>
        <begin position="252"/>
        <end position="336"/>
    </location>
</feature>
<feature type="domain" description="PDZ 4" evidence="3">
    <location>
        <begin position="472"/>
        <end position="561"/>
    </location>
</feature>
<feature type="domain" description="PDZ 5" evidence="3">
    <location>
        <begin position="573"/>
        <end position="658"/>
    </location>
</feature>
<feature type="domain" description="PDZ 6" evidence="3">
    <location>
        <begin position="673"/>
        <end position="755"/>
    </location>
</feature>
<feature type="domain" description="PDZ 7" evidence="3">
    <location>
        <begin position="1004"/>
        <end position="1086"/>
    </location>
</feature>
<feature type="region of interest" description="Disordered" evidence="4">
    <location>
        <begin position="754"/>
        <end position="798"/>
    </location>
</feature>
<feature type="region of interest" description="Disordered" evidence="4">
    <location>
        <begin position="935"/>
        <end position="981"/>
    </location>
</feature>
<feature type="region of interest" description="Disordered" evidence="4">
    <location>
        <begin position="1093"/>
        <end position="1128"/>
    </location>
</feature>
<feature type="compositionally biased region" description="Polar residues" evidence="4">
    <location>
        <begin position="944"/>
        <end position="974"/>
    </location>
</feature>
<feature type="compositionally biased region" description="Polar residues" evidence="4">
    <location>
        <begin position="1093"/>
        <end position="1115"/>
    </location>
</feature>
<feature type="modified residue" description="Phosphoserine" evidence="2">
    <location>
        <position position="43"/>
    </location>
</feature>
<feature type="splice variant" id="VSP_040281" description="In isoform 3." evidence="10">
    <original>VKIQRSDRQLTWDSWASNHSSLHTNHHYNTYHPDHCRVPALTFPKAPPPNSPP</original>
    <variation>A</variation>
    <location>
        <begin position="348"/>
        <end position="400"/>
    </location>
</feature>
<feature type="splice variant" id="VSP_009743" description="In isoform 2." evidence="9">
    <location>
        <begin position="912"/>
        <end position="926"/>
    </location>
</feature>
<feature type="sequence variant" id="VAR_056904" description="In dbSNP:rs17102531.">
    <original>A</original>
    <variation>T</variation>
    <location>
        <position position="322"/>
    </location>
</feature>
<feature type="sequence conflict" description="In Ref. 2; AAI15394 and 3; CAB39895." evidence="11" ref="2 3">
    <original>Q</original>
    <variation>E</variation>
    <location>
        <position position="821"/>
    </location>
</feature>
<feature type="strand" evidence="12">
    <location>
        <begin position="148"/>
        <end position="156"/>
    </location>
</feature>
<feature type="strand" evidence="12">
    <location>
        <begin position="163"/>
        <end position="169"/>
    </location>
</feature>
<feature type="strand" evidence="12">
    <location>
        <begin position="178"/>
        <end position="185"/>
    </location>
</feature>
<feature type="helix" evidence="12">
    <location>
        <begin position="190"/>
        <end position="194"/>
    </location>
</feature>
<feature type="strand" evidence="12">
    <location>
        <begin position="202"/>
        <end position="206"/>
    </location>
</feature>
<feature type="helix" evidence="12">
    <location>
        <begin position="216"/>
        <end position="225"/>
    </location>
</feature>
<feature type="strand" evidence="12">
    <location>
        <begin position="228"/>
        <end position="237"/>
    </location>
</feature>
<keyword id="KW-0002">3D-structure</keyword>
<keyword id="KW-0025">Alternative splicing</keyword>
<keyword id="KW-1003">Cell membrane</keyword>
<keyword id="KW-0966">Cell projection</keyword>
<keyword id="KW-0963">Cytoplasm</keyword>
<keyword id="KW-0968">Cytoplasmic vesicle</keyword>
<keyword id="KW-0256">Endoplasmic reticulum</keyword>
<keyword id="KW-0472">Membrane</keyword>
<keyword id="KW-0597">Phosphoprotein</keyword>
<keyword id="KW-0628">Postsynaptic cell membrane</keyword>
<keyword id="KW-1267">Proteomics identification</keyword>
<keyword id="KW-1185">Reference proteome</keyword>
<keyword id="KW-0677">Repeat</keyword>
<keyword id="KW-0770">Synapse</keyword>
<dbReference type="EMBL" id="AC078889">
    <property type="status" value="NOT_ANNOTATED_CDS"/>
    <property type="molecule type" value="Genomic_DNA"/>
</dbReference>
<dbReference type="EMBL" id="AC090710">
    <property type="status" value="NOT_ANNOTATED_CDS"/>
    <property type="molecule type" value="Genomic_DNA"/>
</dbReference>
<dbReference type="EMBL" id="AC122686">
    <property type="status" value="NOT_ANNOTATED_CDS"/>
    <property type="molecule type" value="Genomic_DNA"/>
</dbReference>
<dbReference type="EMBL" id="AC135251">
    <property type="status" value="NOT_ANNOTATED_CDS"/>
    <property type="molecule type" value="Genomic_DNA"/>
</dbReference>
<dbReference type="EMBL" id="BC115393">
    <property type="protein sequence ID" value="AAI15394.1"/>
    <property type="molecule type" value="mRNA"/>
</dbReference>
<dbReference type="EMBL" id="BC115394">
    <property type="protein sequence ID" value="AAI15395.1"/>
    <property type="molecule type" value="mRNA"/>
</dbReference>
<dbReference type="EMBL" id="AJ133439">
    <property type="protein sequence ID" value="CAB39895.1"/>
    <property type="molecule type" value="mRNA"/>
</dbReference>
<dbReference type="CCDS" id="CCDS41807.1">
    <molecule id="Q9Y3R0-3"/>
</dbReference>
<dbReference type="CCDS" id="CCDS91722.1">
    <molecule id="Q9Y3R0-1"/>
</dbReference>
<dbReference type="RefSeq" id="NP_001171545.1">
    <property type="nucleotide sequence ID" value="NM_001178074.1"/>
</dbReference>
<dbReference type="RefSeq" id="NP_001353651.1">
    <molecule id="Q9Y3R0-1"/>
    <property type="nucleotide sequence ID" value="NM_001366722.1"/>
</dbReference>
<dbReference type="RefSeq" id="NP_001366275.1">
    <molecule id="Q9Y3R0-2"/>
    <property type="nucleotide sequence ID" value="NM_001379346.1"/>
</dbReference>
<dbReference type="RefSeq" id="NP_066973.2">
    <molecule id="Q9Y3R0-3"/>
    <property type="nucleotide sequence ID" value="NM_021150.4"/>
</dbReference>
<dbReference type="RefSeq" id="XP_011536395.1">
    <property type="nucleotide sequence ID" value="XM_011538093.2"/>
</dbReference>
<dbReference type="PDB" id="2JIL">
    <property type="method" value="X-ray"/>
    <property type="resolution" value="1.50 A"/>
    <property type="chains" value="A/B=149-239"/>
</dbReference>
<dbReference type="PDBsum" id="2JIL"/>
<dbReference type="SMR" id="Q9Y3R0"/>
<dbReference type="BioGRID" id="116995">
    <property type="interactions" value="87"/>
</dbReference>
<dbReference type="CORUM" id="Q9Y3R0"/>
<dbReference type="FunCoup" id="Q9Y3R0">
    <property type="interactions" value="663"/>
</dbReference>
<dbReference type="IntAct" id="Q9Y3R0">
    <property type="interactions" value="36"/>
</dbReference>
<dbReference type="MINT" id="Q9Y3R0"/>
<dbReference type="STRING" id="9606.ENSP00000381098"/>
<dbReference type="TCDB" id="8.A.24.1.12">
    <property type="family name" value="the ezrin/radixin/moesin-binding phosphoprotein 50 (ebp50) family"/>
</dbReference>
<dbReference type="GlyGen" id="Q9Y3R0">
    <property type="glycosylation" value="3 sites, 1 O-linked glycan (3 sites)"/>
</dbReference>
<dbReference type="iPTMnet" id="Q9Y3R0"/>
<dbReference type="PhosphoSitePlus" id="Q9Y3R0"/>
<dbReference type="BioMuta" id="GRIP1"/>
<dbReference type="DMDM" id="313104231"/>
<dbReference type="jPOST" id="Q9Y3R0"/>
<dbReference type="MassIVE" id="Q9Y3R0"/>
<dbReference type="PaxDb" id="9606-ENSP00000381098"/>
<dbReference type="PeptideAtlas" id="Q9Y3R0"/>
<dbReference type="ProteomicsDB" id="86065">
    <molecule id="Q9Y3R0-1"/>
</dbReference>
<dbReference type="ProteomicsDB" id="86066">
    <molecule id="Q9Y3R0-2"/>
</dbReference>
<dbReference type="ProteomicsDB" id="86067">
    <molecule id="Q9Y3R0-3"/>
</dbReference>
<dbReference type="Pumba" id="Q9Y3R0"/>
<dbReference type="Antibodypedia" id="8598">
    <property type="antibodies" value="244 antibodies from 36 providers"/>
</dbReference>
<dbReference type="DNASU" id="23426"/>
<dbReference type="Ensembl" id="ENST00000359742.9">
    <molecule id="Q9Y3R0-1"/>
    <property type="protein sequence ID" value="ENSP00000352780.4"/>
    <property type="gene ID" value="ENSG00000155974.14"/>
</dbReference>
<dbReference type="Ensembl" id="ENST00000398016.7">
    <molecule id="Q9Y3R0-3"/>
    <property type="protein sequence ID" value="ENSP00000381098.3"/>
    <property type="gene ID" value="ENSG00000155974.14"/>
</dbReference>
<dbReference type="GeneID" id="23426"/>
<dbReference type="KEGG" id="hsa:23426"/>
<dbReference type="MANE-Select" id="ENST00000359742.9">
    <property type="protein sequence ID" value="ENSP00000352780.4"/>
    <property type="RefSeq nucleotide sequence ID" value="NM_001366722.1"/>
    <property type="RefSeq protein sequence ID" value="NP_001353651.1"/>
</dbReference>
<dbReference type="UCSC" id="uc001stk.4">
    <molecule id="Q9Y3R0-1"/>
    <property type="organism name" value="human"/>
</dbReference>
<dbReference type="AGR" id="HGNC:18708"/>
<dbReference type="CTD" id="23426"/>
<dbReference type="DisGeNET" id="23426"/>
<dbReference type="GeneCards" id="GRIP1"/>
<dbReference type="HGNC" id="HGNC:18708">
    <property type="gene designation" value="GRIP1"/>
</dbReference>
<dbReference type="HPA" id="ENSG00000155974">
    <property type="expression patterns" value="Tissue enhanced (parathyroid)"/>
</dbReference>
<dbReference type="MalaCards" id="GRIP1"/>
<dbReference type="MIM" id="604597">
    <property type="type" value="gene"/>
</dbReference>
<dbReference type="MIM" id="617667">
    <property type="type" value="phenotype"/>
</dbReference>
<dbReference type="neXtProt" id="NX_Q9Y3R0"/>
<dbReference type="OpenTargets" id="ENSG00000155974"/>
<dbReference type="Orphanet" id="2052">
    <property type="disease" value="Fraser syndrome"/>
</dbReference>
<dbReference type="VEuPathDB" id="HostDB:ENSG00000155974"/>
<dbReference type="eggNOG" id="KOG3528">
    <property type="taxonomic scope" value="Eukaryota"/>
</dbReference>
<dbReference type="GeneTree" id="ENSGT00940000158692"/>
<dbReference type="InParanoid" id="Q9Y3R0"/>
<dbReference type="OMA" id="NHLELVI"/>
<dbReference type="OrthoDB" id="75502at2759"/>
<dbReference type="PAN-GO" id="Q9Y3R0">
    <property type="GO annotations" value="2 GO annotations based on evolutionary models"/>
</dbReference>
<dbReference type="PhylomeDB" id="Q9Y3R0"/>
<dbReference type="TreeFam" id="TF326909"/>
<dbReference type="PathwayCommons" id="Q9Y3R0"/>
<dbReference type="Reactome" id="R-HSA-416993">
    <property type="pathway name" value="Trafficking of GluR2-containing AMPA receptors"/>
</dbReference>
<dbReference type="SignaLink" id="Q9Y3R0"/>
<dbReference type="SIGNOR" id="Q9Y3R0"/>
<dbReference type="BioGRID-ORCS" id="23426">
    <property type="hits" value="11 hits in 1138 CRISPR screens"/>
</dbReference>
<dbReference type="CD-CODE" id="B5B9A610">
    <property type="entry name" value="PML body"/>
</dbReference>
<dbReference type="ChiTaRS" id="GRIP1">
    <property type="organism name" value="human"/>
</dbReference>
<dbReference type="EvolutionaryTrace" id="Q9Y3R0"/>
<dbReference type="GeneWiki" id="GRIP1_(gene)"/>
<dbReference type="GenomeRNAi" id="23426"/>
<dbReference type="Pharos" id="Q9Y3R0">
    <property type="development level" value="Tbio"/>
</dbReference>
<dbReference type="PRO" id="PR:Q9Y3R0"/>
<dbReference type="Proteomes" id="UP000005640">
    <property type="component" value="Chromosome 12"/>
</dbReference>
<dbReference type="RNAct" id="Q9Y3R0">
    <property type="molecule type" value="protein"/>
</dbReference>
<dbReference type="Bgee" id="ENSG00000155974">
    <property type="expression patterns" value="Expressed in cortical plate and 135 other cell types or tissues"/>
</dbReference>
<dbReference type="ExpressionAtlas" id="Q9Y3R0">
    <property type="expression patterns" value="baseline and differential"/>
</dbReference>
<dbReference type="GO" id="GO:0031410">
    <property type="term" value="C:cytoplasmic vesicle"/>
    <property type="evidence" value="ECO:0007669"/>
    <property type="project" value="UniProtKB-KW"/>
</dbReference>
<dbReference type="GO" id="GO:0005829">
    <property type="term" value="C:cytosol"/>
    <property type="evidence" value="ECO:0000304"/>
    <property type="project" value="Reactome"/>
</dbReference>
<dbReference type="GO" id="GO:0030425">
    <property type="term" value="C:dendrite"/>
    <property type="evidence" value="ECO:0007669"/>
    <property type="project" value="UniProtKB-SubCell"/>
</dbReference>
<dbReference type="GO" id="GO:0005789">
    <property type="term" value="C:endoplasmic reticulum membrane"/>
    <property type="evidence" value="ECO:0007669"/>
    <property type="project" value="UniProtKB-SubCell"/>
</dbReference>
<dbReference type="GO" id="GO:0043005">
    <property type="term" value="C:neuron projection"/>
    <property type="evidence" value="ECO:0000250"/>
    <property type="project" value="BHF-UCL"/>
</dbReference>
<dbReference type="GO" id="GO:0043204">
    <property type="term" value="C:perikaryon"/>
    <property type="evidence" value="ECO:0007669"/>
    <property type="project" value="UniProtKB-SubCell"/>
</dbReference>
<dbReference type="GO" id="GO:0005886">
    <property type="term" value="C:plasma membrane"/>
    <property type="evidence" value="ECO:0000250"/>
    <property type="project" value="BHF-UCL"/>
</dbReference>
<dbReference type="GO" id="GO:0014069">
    <property type="term" value="C:postsynaptic density"/>
    <property type="evidence" value="ECO:0007669"/>
    <property type="project" value="UniProtKB-SubCell"/>
</dbReference>
<dbReference type="GO" id="GO:0045211">
    <property type="term" value="C:postsynaptic membrane"/>
    <property type="evidence" value="ECO:0007669"/>
    <property type="project" value="UniProtKB-SubCell"/>
</dbReference>
<dbReference type="GO" id="GO:0008013">
    <property type="term" value="F:beta-catenin binding"/>
    <property type="evidence" value="ECO:0000304"/>
    <property type="project" value="AgBase"/>
</dbReference>
<dbReference type="GO" id="GO:0030159">
    <property type="term" value="F:signaling receptor complex adaptor activity"/>
    <property type="evidence" value="ECO:0000303"/>
    <property type="project" value="UniProtKB"/>
</dbReference>
<dbReference type="GO" id="GO:0035556">
    <property type="term" value="P:intracellular signal transduction"/>
    <property type="evidence" value="ECO:0000303"/>
    <property type="project" value="UniProtKB"/>
</dbReference>
<dbReference type="GO" id="GO:0098887">
    <property type="term" value="P:neurotransmitter receptor transport, endosome to postsynaptic membrane"/>
    <property type="evidence" value="ECO:0000318"/>
    <property type="project" value="GO_Central"/>
</dbReference>
<dbReference type="GO" id="GO:0150012">
    <property type="term" value="P:positive regulation of neuron projection arborization"/>
    <property type="evidence" value="ECO:0000250"/>
    <property type="project" value="ARUK-UCL"/>
</dbReference>
<dbReference type="CDD" id="cd06687">
    <property type="entry name" value="PDZ1_GRIP1-2-like"/>
    <property type="match status" value="1"/>
</dbReference>
<dbReference type="CDD" id="cd06681">
    <property type="entry name" value="PDZ2_GRIP1-2-like"/>
    <property type="match status" value="1"/>
</dbReference>
<dbReference type="CDD" id="cd06684">
    <property type="entry name" value="PDZ3_GRIP1-2-like"/>
    <property type="match status" value="1"/>
</dbReference>
<dbReference type="CDD" id="cd06686">
    <property type="entry name" value="PDZ4_GRIP1-2-like"/>
    <property type="match status" value="1"/>
</dbReference>
<dbReference type="CDD" id="cd06682">
    <property type="entry name" value="PDZ5_GRIP1-2-like"/>
    <property type="match status" value="1"/>
</dbReference>
<dbReference type="CDD" id="cd06683">
    <property type="entry name" value="PDZ6_GRIP1-2-like"/>
    <property type="match status" value="1"/>
</dbReference>
<dbReference type="CDD" id="cd06685">
    <property type="entry name" value="PDZ7_GRIP1-2-like"/>
    <property type="match status" value="1"/>
</dbReference>
<dbReference type="FunFam" id="2.30.42.10:FF:000021">
    <property type="entry name" value="Glutamate receptor interacting protein 1"/>
    <property type="match status" value="1"/>
</dbReference>
<dbReference type="FunFam" id="2.30.42.10:FF:000022">
    <property type="entry name" value="Glutamate receptor interacting protein 1"/>
    <property type="match status" value="1"/>
</dbReference>
<dbReference type="FunFam" id="2.30.42.10:FF:000023">
    <property type="entry name" value="Glutamate receptor interacting protein 1"/>
    <property type="match status" value="1"/>
</dbReference>
<dbReference type="FunFam" id="2.30.42.10:FF:000025">
    <property type="entry name" value="Glutamate receptor interacting protein 1"/>
    <property type="match status" value="1"/>
</dbReference>
<dbReference type="FunFam" id="2.30.42.10:FF:000031">
    <property type="entry name" value="Glutamate receptor interacting protein 1"/>
    <property type="match status" value="1"/>
</dbReference>
<dbReference type="FunFam" id="2.30.42.10:FF:000034">
    <property type="entry name" value="Glutamate receptor interacting protein 1"/>
    <property type="match status" value="1"/>
</dbReference>
<dbReference type="FunFam" id="2.30.42.10:FF:000035">
    <property type="entry name" value="Glutamate receptor interacting protein 1"/>
    <property type="match status" value="1"/>
</dbReference>
<dbReference type="Gene3D" id="2.30.42.10">
    <property type="match status" value="7"/>
</dbReference>
<dbReference type="InterPro" id="IPR043545">
    <property type="entry name" value="GRIP1/2"/>
</dbReference>
<dbReference type="InterPro" id="IPR001478">
    <property type="entry name" value="PDZ"/>
</dbReference>
<dbReference type="InterPro" id="IPR041489">
    <property type="entry name" value="PDZ_6"/>
</dbReference>
<dbReference type="InterPro" id="IPR036034">
    <property type="entry name" value="PDZ_sf"/>
</dbReference>
<dbReference type="PANTHER" id="PTHR46227:SF3">
    <property type="entry name" value="GLUTAMATE RECEPTOR-INTERACTING PROTEIN 1"/>
    <property type="match status" value="1"/>
</dbReference>
<dbReference type="PANTHER" id="PTHR46227">
    <property type="entry name" value="GLUTAMATE RECEPTOR-INTERACTING PROTEIN GRIP"/>
    <property type="match status" value="1"/>
</dbReference>
<dbReference type="Pfam" id="PF00595">
    <property type="entry name" value="PDZ"/>
    <property type="match status" value="6"/>
</dbReference>
<dbReference type="Pfam" id="PF17820">
    <property type="entry name" value="PDZ_6"/>
    <property type="match status" value="1"/>
</dbReference>
<dbReference type="SMART" id="SM00228">
    <property type="entry name" value="PDZ"/>
    <property type="match status" value="7"/>
</dbReference>
<dbReference type="SUPFAM" id="SSF50156">
    <property type="entry name" value="PDZ domain-like"/>
    <property type="match status" value="7"/>
</dbReference>
<dbReference type="PROSITE" id="PS50106">
    <property type="entry name" value="PDZ"/>
    <property type="match status" value="7"/>
</dbReference>
<protein>
    <recommendedName>
        <fullName>Glutamate receptor-interacting protein 1</fullName>
        <shortName>GRIP-1</shortName>
    </recommendedName>
</protein>
<evidence type="ECO:0000250" key="1"/>
<evidence type="ECO:0000250" key="2">
    <source>
        <dbReference type="UniProtKB" id="P97879"/>
    </source>
</evidence>
<evidence type="ECO:0000255" key="3">
    <source>
        <dbReference type="PROSITE-ProRule" id="PRU00143"/>
    </source>
</evidence>
<evidence type="ECO:0000256" key="4">
    <source>
        <dbReference type="SAM" id="MobiDB-lite"/>
    </source>
</evidence>
<evidence type="ECO:0000269" key="5">
    <source>
    </source>
</evidence>
<evidence type="ECO:0000269" key="6">
    <source>
    </source>
</evidence>
<evidence type="ECO:0000269" key="7">
    <source>
    </source>
</evidence>
<evidence type="ECO:0000269" key="8">
    <source>
    </source>
</evidence>
<evidence type="ECO:0000303" key="9">
    <source>
    </source>
</evidence>
<evidence type="ECO:0000303" key="10">
    <source>
    </source>
</evidence>
<evidence type="ECO:0000305" key="11"/>
<evidence type="ECO:0007829" key="12">
    <source>
        <dbReference type="PDB" id="2JIL"/>
    </source>
</evidence>